<dbReference type="EC" id="2.4.2.9" evidence="1"/>
<dbReference type="EMBL" id="AP006878">
    <property type="protein sequence ID" value="BAD85476.1"/>
    <property type="molecule type" value="Genomic_DNA"/>
</dbReference>
<dbReference type="RefSeq" id="WP_011250238.1">
    <property type="nucleotide sequence ID" value="NC_006624.1"/>
</dbReference>
<dbReference type="SMR" id="Q5JGQ6"/>
<dbReference type="STRING" id="69014.TK1287"/>
<dbReference type="EnsemblBacteria" id="BAD85476">
    <property type="protein sequence ID" value="BAD85476"/>
    <property type="gene ID" value="TK1287"/>
</dbReference>
<dbReference type="GeneID" id="78447807"/>
<dbReference type="KEGG" id="tko:TK1287"/>
<dbReference type="PATRIC" id="fig|69014.16.peg.1259"/>
<dbReference type="eggNOG" id="arCOG04128">
    <property type="taxonomic scope" value="Archaea"/>
</dbReference>
<dbReference type="HOGENOM" id="CLU_067096_2_0_2"/>
<dbReference type="InParanoid" id="Q5JGQ6"/>
<dbReference type="OrthoDB" id="80352at2157"/>
<dbReference type="PhylomeDB" id="Q5JGQ6"/>
<dbReference type="UniPathway" id="UPA00574">
    <property type="reaction ID" value="UER00636"/>
</dbReference>
<dbReference type="Proteomes" id="UP000000536">
    <property type="component" value="Chromosome"/>
</dbReference>
<dbReference type="GO" id="GO:0005737">
    <property type="term" value="C:cytoplasm"/>
    <property type="evidence" value="ECO:0000318"/>
    <property type="project" value="GO_Central"/>
</dbReference>
<dbReference type="GO" id="GO:0002189">
    <property type="term" value="C:ribose phosphate diphosphokinase complex"/>
    <property type="evidence" value="ECO:0000318"/>
    <property type="project" value="GO_Central"/>
</dbReference>
<dbReference type="GO" id="GO:0005525">
    <property type="term" value="F:GTP binding"/>
    <property type="evidence" value="ECO:0007669"/>
    <property type="project" value="UniProtKB-KW"/>
</dbReference>
<dbReference type="GO" id="GO:0000287">
    <property type="term" value="F:magnesium ion binding"/>
    <property type="evidence" value="ECO:0007669"/>
    <property type="project" value="UniProtKB-UniRule"/>
</dbReference>
<dbReference type="GO" id="GO:0004749">
    <property type="term" value="F:ribose phosphate diphosphokinase activity"/>
    <property type="evidence" value="ECO:0000318"/>
    <property type="project" value="GO_Central"/>
</dbReference>
<dbReference type="GO" id="GO:0004845">
    <property type="term" value="F:uracil phosphoribosyltransferase activity"/>
    <property type="evidence" value="ECO:0007669"/>
    <property type="project" value="UniProtKB-UniRule"/>
</dbReference>
<dbReference type="GO" id="GO:0006015">
    <property type="term" value="P:5-phosphoribose 1-diphosphate biosynthetic process"/>
    <property type="evidence" value="ECO:0000318"/>
    <property type="project" value="GO_Central"/>
</dbReference>
<dbReference type="GO" id="GO:0006164">
    <property type="term" value="P:purine nucleotide biosynthetic process"/>
    <property type="evidence" value="ECO:0000318"/>
    <property type="project" value="GO_Central"/>
</dbReference>
<dbReference type="GO" id="GO:0044206">
    <property type="term" value="P:UMP salvage"/>
    <property type="evidence" value="ECO:0007669"/>
    <property type="project" value="UniProtKB-UniRule"/>
</dbReference>
<dbReference type="GO" id="GO:0006223">
    <property type="term" value="P:uracil salvage"/>
    <property type="evidence" value="ECO:0007669"/>
    <property type="project" value="InterPro"/>
</dbReference>
<dbReference type="CDD" id="cd06223">
    <property type="entry name" value="PRTases_typeI"/>
    <property type="match status" value="1"/>
</dbReference>
<dbReference type="Gene3D" id="3.40.50.2020">
    <property type="match status" value="1"/>
</dbReference>
<dbReference type="HAMAP" id="MF_01218_A">
    <property type="entry name" value="Upp_A"/>
    <property type="match status" value="1"/>
</dbReference>
<dbReference type="InterPro" id="IPR000836">
    <property type="entry name" value="PRibTrfase_dom"/>
</dbReference>
<dbReference type="InterPro" id="IPR029057">
    <property type="entry name" value="PRTase-like"/>
</dbReference>
<dbReference type="InterPro" id="IPR034331">
    <property type="entry name" value="Upp_A"/>
</dbReference>
<dbReference type="InterPro" id="IPR050054">
    <property type="entry name" value="UPRTase/APRTase"/>
</dbReference>
<dbReference type="InterPro" id="IPR005765">
    <property type="entry name" value="Ura_phspho_trans"/>
</dbReference>
<dbReference type="NCBIfam" id="NF001097">
    <property type="entry name" value="PRK00129.1"/>
    <property type="match status" value="1"/>
</dbReference>
<dbReference type="NCBIfam" id="TIGR01091">
    <property type="entry name" value="upp"/>
    <property type="match status" value="1"/>
</dbReference>
<dbReference type="PANTHER" id="PTHR32315">
    <property type="entry name" value="ADENINE PHOSPHORIBOSYLTRANSFERASE"/>
    <property type="match status" value="1"/>
</dbReference>
<dbReference type="PANTHER" id="PTHR32315:SF4">
    <property type="entry name" value="URACIL PHOSPHORIBOSYLTRANSFERASE, CHLOROPLASTIC"/>
    <property type="match status" value="1"/>
</dbReference>
<dbReference type="Pfam" id="PF14681">
    <property type="entry name" value="UPRTase"/>
    <property type="match status" value="1"/>
</dbReference>
<dbReference type="SUPFAM" id="SSF53271">
    <property type="entry name" value="PRTase-like"/>
    <property type="match status" value="1"/>
</dbReference>
<proteinExistence type="inferred from homology"/>
<organism>
    <name type="scientific">Thermococcus kodakarensis (strain ATCC BAA-918 / JCM 12380 / KOD1)</name>
    <name type="common">Pyrococcus kodakaraensis (strain KOD1)</name>
    <dbReference type="NCBI Taxonomy" id="69014"/>
    <lineage>
        <taxon>Archaea</taxon>
        <taxon>Methanobacteriati</taxon>
        <taxon>Methanobacteriota</taxon>
        <taxon>Thermococci</taxon>
        <taxon>Thermococcales</taxon>
        <taxon>Thermococcaceae</taxon>
        <taxon>Thermococcus</taxon>
    </lineage>
</organism>
<name>UPP_THEKO</name>
<feature type="chain" id="PRO_0000120925" description="Uracil phosphoribosyltransferase">
    <location>
        <begin position="1"/>
        <end position="230"/>
    </location>
</feature>
<feature type="binding site" evidence="1">
    <location>
        <begin position="38"/>
        <end position="42"/>
    </location>
    <ligand>
        <name>GTP</name>
        <dbReference type="ChEBI" id="CHEBI:37565"/>
    </ligand>
</feature>
<feature type="binding site" evidence="1">
    <location>
        <position position="87"/>
    </location>
    <ligand>
        <name>5-phospho-alpha-D-ribose 1-diphosphate</name>
        <dbReference type="ChEBI" id="CHEBI:58017"/>
    </ligand>
</feature>
<feature type="binding site" evidence="1">
    <location>
        <position position="112"/>
    </location>
    <ligand>
        <name>5-phospho-alpha-D-ribose 1-diphosphate</name>
        <dbReference type="ChEBI" id="CHEBI:58017"/>
    </ligand>
</feature>
<feature type="binding site" evidence="1">
    <location>
        <begin position="140"/>
        <end position="148"/>
    </location>
    <ligand>
        <name>5-phospho-alpha-D-ribose 1-diphosphate</name>
        <dbReference type="ChEBI" id="CHEBI:58017"/>
    </ligand>
</feature>
<feature type="binding site" evidence="1">
    <location>
        <position position="204"/>
    </location>
    <ligand>
        <name>uracil</name>
        <dbReference type="ChEBI" id="CHEBI:17568"/>
    </ligand>
</feature>
<feature type="binding site" evidence="1">
    <location>
        <begin position="209"/>
        <end position="211"/>
    </location>
    <ligand>
        <name>uracil</name>
        <dbReference type="ChEBI" id="CHEBI:17568"/>
    </ligand>
</feature>
<feature type="binding site" evidence="1">
    <location>
        <position position="210"/>
    </location>
    <ligand>
        <name>5-phospho-alpha-D-ribose 1-diphosphate</name>
        <dbReference type="ChEBI" id="CHEBI:58017"/>
    </ligand>
</feature>
<protein>
    <recommendedName>
        <fullName evidence="1">Uracil phosphoribosyltransferase</fullName>
        <ecNumber evidence="1">2.4.2.9</ecNumber>
    </recommendedName>
    <alternativeName>
        <fullName evidence="1">UMP pyrophosphorylase</fullName>
    </alternativeName>
    <alternativeName>
        <fullName evidence="1">UPRTase</fullName>
    </alternativeName>
</protein>
<reference key="1">
    <citation type="journal article" date="2005" name="Genome Res.">
        <title>Complete genome sequence of the hyperthermophilic archaeon Thermococcus kodakaraensis KOD1 and comparison with Pyrococcus genomes.</title>
        <authorList>
            <person name="Fukui T."/>
            <person name="Atomi H."/>
            <person name="Kanai T."/>
            <person name="Matsumi R."/>
            <person name="Fujiwara S."/>
            <person name="Imanaka T."/>
        </authorList>
    </citation>
    <scope>NUCLEOTIDE SEQUENCE [LARGE SCALE GENOMIC DNA]</scope>
    <source>
        <strain>ATCC BAA-918 / JCM 12380 / KOD1</strain>
    </source>
</reference>
<sequence>MKRDERWEGVYSFEDSPFIMEILTELRDESTGPIAFRKGLVKLGRYMAYEITKTMATEKVPIRTPLEETEGIIVKDRRNVVIITVLRAAIPLMEGLIKVFEHARVGIVSASRGKAPKFEIEMKYVKVPRIKAEDTVIIADPMIATGSTLIKVLDEVKKYGNAKRYVVVGVLAAPEGITRIKEAHPDVEMFVAAIDRELNDHGYILPGLGDAGDRAFGEPIRFEDGAPGGI</sequence>
<accession>Q5JGQ6</accession>
<keyword id="KW-0021">Allosteric enzyme</keyword>
<keyword id="KW-0328">Glycosyltransferase</keyword>
<keyword id="KW-0342">GTP-binding</keyword>
<keyword id="KW-0460">Magnesium</keyword>
<keyword id="KW-0547">Nucleotide-binding</keyword>
<keyword id="KW-1185">Reference proteome</keyword>
<keyword id="KW-0808">Transferase</keyword>
<gene>
    <name evidence="1" type="primary">upp</name>
    <name type="ordered locus">TK1287</name>
</gene>
<evidence type="ECO:0000255" key="1">
    <source>
        <dbReference type="HAMAP-Rule" id="MF_01218"/>
    </source>
</evidence>
<comment type="function">
    <text evidence="1">Catalyzes the conversion of uracil and 5-phospho-alpha-D-ribose 1-diphosphate (PRPP) to UMP and diphosphate.</text>
</comment>
<comment type="catalytic activity">
    <reaction evidence="1">
        <text>UMP + diphosphate = 5-phospho-alpha-D-ribose 1-diphosphate + uracil</text>
        <dbReference type="Rhea" id="RHEA:13017"/>
        <dbReference type="ChEBI" id="CHEBI:17568"/>
        <dbReference type="ChEBI" id="CHEBI:33019"/>
        <dbReference type="ChEBI" id="CHEBI:57865"/>
        <dbReference type="ChEBI" id="CHEBI:58017"/>
        <dbReference type="EC" id="2.4.2.9"/>
    </reaction>
</comment>
<comment type="cofactor">
    <cofactor evidence="1">
        <name>Mg(2+)</name>
        <dbReference type="ChEBI" id="CHEBI:18420"/>
    </cofactor>
    <text evidence="1">Binds 1 Mg(2+) ion per subunit. The magnesium is bound as Mg-PRPP.</text>
</comment>
<comment type="activity regulation">
    <text evidence="1">Allosterically activated by GTP.</text>
</comment>
<comment type="pathway">
    <text evidence="1">Pyrimidine metabolism; UMP biosynthesis via salvage pathway; UMP from uracil: step 1/1.</text>
</comment>
<comment type="similarity">
    <text evidence="1">Belongs to the UPRTase family.</text>
</comment>